<keyword id="KW-1185">Reference proteome</keyword>
<sequence>MCANIPEFDSFYENENINYNLESFAPLNCDVNSPFLPINNNDINVNAYGDENLTYSNFLLSYNDKLATTTAKNNSINNSNSNNNSNNNKNNNNNHNNNNLLGNDISQMAFLLDYPSTLNEPQFAVNCKDIYRKDISTPSSLVSSLPPAKFSLSLSNSPSPPPPSSSSLKHGEAIISNTSESSDIFADPNSFEKDTMPLTQELTLENLNNQLNYPDFTINAIEQDPAPSSFSSSSSSSESTVSSSRKRKPCHDSYTHSSPSSSESKKISDSRLSAEGLAKVLNLESPEEALKRERFILGIFQNELNYPLGYKTWIRDTTKEYRTKLINQLHERVKVKYPEYNQSILETIIRRGTYYMMQSRLRRERRMKLKERKRTT</sequence>
<name>YBC9_YEAST</name>
<protein>
    <recommendedName>
        <fullName>Uncharacterized protein YBL029W</fullName>
    </recommendedName>
</protein>
<evidence type="ECO:0000256" key="1">
    <source>
        <dbReference type="SAM" id="MobiDB-lite"/>
    </source>
</evidence>
<dbReference type="EMBL" id="X77291">
    <property type="protein sequence ID" value="CAA54498.1"/>
    <property type="molecule type" value="Genomic_DNA"/>
</dbReference>
<dbReference type="EMBL" id="Z35789">
    <property type="protein sequence ID" value="CAA84848.1"/>
    <property type="molecule type" value="Genomic_DNA"/>
</dbReference>
<dbReference type="EMBL" id="Z35790">
    <property type="protein sequence ID" value="CAA84849.1"/>
    <property type="molecule type" value="Genomic_DNA"/>
</dbReference>
<dbReference type="EMBL" id="AY692662">
    <property type="protein sequence ID" value="AAT92681.1"/>
    <property type="molecule type" value="Genomic_DNA"/>
</dbReference>
<dbReference type="EMBL" id="BK006936">
    <property type="protein sequence ID" value="DAA07091.1"/>
    <property type="molecule type" value="Genomic_DNA"/>
</dbReference>
<dbReference type="PIR" id="S45763">
    <property type="entry name" value="S45763"/>
</dbReference>
<dbReference type="RefSeq" id="NP_009524.1">
    <property type="nucleotide sequence ID" value="NM_001178269.1"/>
</dbReference>
<dbReference type="BioGRID" id="32669">
    <property type="interactions" value="22"/>
</dbReference>
<dbReference type="DIP" id="DIP-6622N"/>
<dbReference type="FunCoup" id="P38201">
    <property type="interactions" value="98"/>
</dbReference>
<dbReference type="IntAct" id="P38201">
    <property type="interactions" value="2"/>
</dbReference>
<dbReference type="STRING" id="4932.YBL029W"/>
<dbReference type="iPTMnet" id="P38201"/>
<dbReference type="PaxDb" id="4932-YBL029W"/>
<dbReference type="PeptideAtlas" id="P38201"/>
<dbReference type="EnsemblFungi" id="YBL029W_mRNA">
    <property type="protein sequence ID" value="YBL029W"/>
    <property type="gene ID" value="YBL029W"/>
</dbReference>
<dbReference type="GeneID" id="852252"/>
<dbReference type="KEGG" id="sce:YBL029W"/>
<dbReference type="AGR" id="SGD:S000000125"/>
<dbReference type="SGD" id="S000000125">
    <property type="gene designation" value="YBL029W"/>
</dbReference>
<dbReference type="VEuPathDB" id="FungiDB:YBL029W"/>
<dbReference type="eggNOG" id="ENOG502S1A5">
    <property type="taxonomic scope" value="Eukaryota"/>
</dbReference>
<dbReference type="HOGENOM" id="CLU_063294_0_0_1"/>
<dbReference type="InParanoid" id="P38201"/>
<dbReference type="OMA" id="FAVNCKD"/>
<dbReference type="OrthoDB" id="4096434at2759"/>
<dbReference type="BioCyc" id="YEAST:G3O-28932-MONOMER"/>
<dbReference type="BioGRID-ORCS" id="852252">
    <property type="hits" value="0 hits in 10 CRISPR screens"/>
</dbReference>
<dbReference type="PRO" id="PR:P38201"/>
<dbReference type="Proteomes" id="UP000002311">
    <property type="component" value="Chromosome II"/>
</dbReference>
<dbReference type="RNAct" id="P38201">
    <property type="molecule type" value="protein"/>
</dbReference>
<dbReference type="GO" id="GO:0005737">
    <property type="term" value="C:cytoplasm"/>
    <property type="evidence" value="ECO:0007005"/>
    <property type="project" value="SGD"/>
</dbReference>
<dbReference type="GO" id="GO:0005634">
    <property type="term" value="C:nucleus"/>
    <property type="evidence" value="ECO:0007005"/>
    <property type="project" value="SGD"/>
</dbReference>
<gene>
    <name type="ordered locus">YBL029W</name>
    <name type="ORF">YBL0422</name>
</gene>
<feature type="chain" id="PRO_0000202461" description="Uncharacterized protein YBL029W">
    <location>
        <begin position="1"/>
        <end position="376"/>
    </location>
</feature>
<feature type="region of interest" description="Disordered" evidence="1">
    <location>
        <begin position="73"/>
        <end position="100"/>
    </location>
</feature>
<feature type="region of interest" description="Disordered" evidence="1">
    <location>
        <begin position="222"/>
        <end position="269"/>
    </location>
</feature>
<feature type="compositionally biased region" description="Low complexity" evidence="1">
    <location>
        <begin position="73"/>
        <end position="99"/>
    </location>
</feature>
<feature type="compositionally biased region" description="Low complexity" evidence="1">
    <location>
        <begin position="228"/>
        <end position="243"/>
    </location>
</feature>
<organism>
    <name type="scientific">Saccharomyces cerevisiae (strain ATCC 204508 / S288c)</name>
    <name type="common">Baker's yeast</name>
    <dbReference type="NCBI Taxonomy" id="559292"/>
    <lineage>
        <taxon>Eukaryota</taxon>
        <taxon>Fungi</taxon>
        <taxon>Dikarya</taxon>
        <taxon>Ascomycota</taxon>
        <taxon>Saccharomycotina</taxon>
        <taxon>Saccharomycetes</taxon>
        <taxon>Saccharomycetales</taxon>
        <taxon>Saccharomycetaceae</taxon>
        <taxon>Saccharomyces</taxon>
    </lineage>
</organism>
<accession>P38201</accession>
<accession>D6VPX1</accession>
<accession>P89491</accession>
<proteinExistence type="predicted"/>
<reference key="1">
    <citation type="journal article" date="1994" name="Yeast">
        <title>Analysis of a 17.4 kb DNA segment of yeast chromosome II encompassing the ribosomal protein L19 as well as proteins with homologies to components of the hnRNP and snRNP complexes and to the human proliferation-associated p120 antigen.</title>
        <authorList>
            <person name="van Dyck L."/>
            <person name="Jonniaux J.-L."/>
            <person name="Barreiros T.D.M."/>
            <person name="Kleine K."/>
            <person name="Goffeau A."/>
        </authorList>
    </citation>
    <scope>NUCLEOTIDE SEQUENCE [GENOMIC DNA]</scope>
    <source>
        <strain>ATCC 204508 / S288c</strain>
    </source>
</reference>
<reference key="2">
    <citation type="journal article" date="1994" name="EMBO J.">
        <title>Complete DNA sequence of yeast chromosome II.</title>
        <authorList>
            <person name="Feldmann H."/>
            <person name="Aigle M."/>
            <person name="Aljinovic G."/>
            <person name="Andre B."/>
            <person name="Baclet M.C."/>
            <person name="Barthe C."/>
            <person name="Baur A."/>
            <person name="Becam A.-M."/>
            <person name="Biteau N."/>
            <person name="Boles E."/>
            <person name="Brandt T."/>
            <person name="Brendel M."/>
            <person name="Brueckner M."/>
            <person name="Bussereau F."/>
            <person name="Christiansen C."/>
            <person name="Contreras R."/>
            <person name="Crouzet M."/>
            <person name="Cziepluch C."/>
            <person name="Demolis N."/>
            <person name="Delaveau T."/>
            <person name="Doignon F."/>
            <person name="Domdey H."/>
            <person name="Duesterhus S."/>
            <person name="Dubois E."/>
            <person name="Dujon B."/>
            <person name="El Bakkoury M."/>
            <person name="Entian K.-D."/>
            <person name="Feuermann M."/>
            <person name="Fiers W."/>
            <person name="Fobo G.M."/>
            <person name="Fritz C."/>
            <person name="Gassenhuber J."/>
            <person name="Glansdorff N."/>
            <person name="Goffeau A."/>
            <person name="Grivell L.A."/>
            <person name="de Haan M."/>
            <person name="Hein C."/>
            <person name="Herbert C.J."/>
            <person name="Hollenberg C.P."/>
            <person name="Holmstroem K."/>
            <person name="Jacq C."/>
            <person name="Jacquet M."/>
            <person name="Jauniaux J.-C."/>
            <person name="Jonniaux J.-L."/>
            <person name="Kallesoee T."/>
            <person name="Kiesau P."/>
            <person name="Kirchrath L."/>
            <person name="Koetter P."/>
            <person name="Korol S."/>
            <person name="Liebl S."/>
            <person name="Logghe M."/>
            <person name="Lohan A.J.E."/>
            <person name="Louis E.J."/>
            <person name="Li Z.Y."/>
            <person name="Maat M.J."/>
            <person name="Mallet L."/>
            <person name="Mannhaupt G."/>
            <person name="Messenguy F."/>
            <person name="Miosga T."/>
            <person name="Molemans F."/>
            <person name="Mueller S."/>
            <person name="Nasr F."/>
            <person name="Obermaier B."/>
            <person name="Perea J."/>
            <person name="Pierard A."/>
            <person name="Piravandi E."/>
            <person name="Pohl F.M."/>
            <person name="Pohl T.M."/>
            <person name="Potier S."/>
            <person name="Proft M."/>
            <person name="Purnelle B."/>
            <person name="Ramezani Rad M."/>
            <person name="Rieger M."/>
            <person name="Rose M."/>
            <person name="Schaaff-Gerstenschlaeger I."/>
            <person name="Scherens B."/>
            <person name="Schwarzlose C."/>
            <person name="Skala J."/>
            <person name="Slonimski P.P."/>
            <person name="Smits P.H.M."/>
            <person name="Souciet J.-L."/>
            <person name="Steensma H.Y."/>
            <person name="Stucka R."/>
            <person name="Urrestarazu L.A."/>
            <person name="van der Aart Q.J.M."/>
            <person name="Van Dyck L."/>
            <person name="Vassarotti A."/>
            <person name="Vetter I."/>
            <person name="Vierendeels F."/>
            <person name="Vissers S."/>
            <person name="Wagner G."/>
            <person name="de Wergifosse P."/>
            <person name="Wolfe K.H."/>
            <person name="Zagulski M."/>
            <person name="Zimmermann F.K."/>
            <person name="Mewes H.-W."/>
            <person name="Kleine K."/>
        </authorList>
    </citation>
    <scope>NUCLEOTIDE SEQUENCE [LARGE SCALE GENOMIC DNA]</scope>
    <source>
        <strain>ATCC 204508 / S288c</strain>
    </source>
</reference>
<reference key="3">
    <citation type="journal article" date="2014" name="G3 (Bethesda)">
        <title>The reference genome sequence of Saccharomyces cerevisiae: Then and now.</title>
        <authorList>
            <person name="Engel S.R."/>
            <person name="Dietrich F.S."/>
            <person name="Fisk D.G."/>
            <person name="Binkley G."/>
            <person name="Balakrishnan R."/>
            <person name="Costanzo M.C."/>
            <person name="Dwight S.S."/>
            <person name="Hitz B.C."/>
            <person name="Karra K."/>
            <person name="Nash R.S."/>
            <person name="Weng S."/>
            <person name="Wong E.D."/>
            <person name="Lloyd P."/>
            <person name="Skrzypek M.S."/>
            <person name="Miyasato S.R."/>
            <person name="Simison M."/>
            <person name="Cherry J.M."/>
        </authorList>
    </citation>
    <scope>GENOME REANNOTATION</scope>
    <source>
        <strain>ATCC 204508 / S288c</strain>
    </source>
</reference>
<reference key="4">
    <citation type="journal article" date="2007" name="Genome Res.">
        <title>Approaching a complete repository of sequence-verified protein-encoding clones for Saccharomyces cerevisiae.</title>
        <authorList>
            <person name="Hu Y."/>
            <person name="Rolfs A."/>
            <person name="Bhullar B."/>
            <person name="Murthy T.V.S."/>
            <person name="Zhu C."/>
            <person name="Berger M.F."/>
            <person name="Camargo A.A."/>
            <person name="Kelley F."/>
            <person name="McCarron S."/>
            <person name="Jepson D."/>
            <person name="Richardson A."/>
            <person name="Raphael J."/>
            <person name="Moreira D."/>
            <person name="Taycher E."/>
            <person name="Zuo D."/>
            <person name="Mohr S."/>
            <person name="Kane M.F."/>
            <person name="Williamson J."/>
            <person name="Simpson A.J.G."/>
            <person name="Bulyk M.L."/>
            <person name="Harlow E."/>
            <person name="Marsischky G."/>
            <person name="Kolodner R.D."/>
            <person name="LaBaer J."/>
        </authorList>
    </citation>
    <scope>NUCLEOTIDE SEQUENCE [GENOMIC DNA]</scope>
    <source>
        <strain>ATCC 204508 / S288c</strain>
    </source>
</reference>